<proteinExistence type="inferred from homology"/>
<name>RECA_THET8</name>
<protein>
    <recommendedName>
        <fullName evidence="1">Protein RecA</fullName>
    </recommendedName>
    <alternativeName>
        <fullName evidence="1">Recombinase A</fullName>
    </alternativeName>
</protein>
<evidence type="ECO:0000255" key="1">
    <source>
        <dbReference type="HAMAP-Rule" id="MF_00268"/>
    </source>
</evidence>
<sequence length="340" mass="36385">MDESKRKALENALKAIEKEFGKGAVMRLGEMPKQQVDVIPTGSLALDLALGIGGIPRGRIVEIYGPESGGKTTLALTIIAQAQRRGGVAAFVDAEHALDPLYAQRLGVQVEDLLVSQPDTGEQALEIVELLARSGAVDVIVVDSVAALVPRAEIEGEMGDQHVGLQARLMSQALRKLTAVLAKSNTAAIFINQVREKVGVTYGNPETTPGGRALKFYASVRLDVRKSGQPIKVGNEAVGVKVRVKVVKNKLAPPFREAELEIYFGRGLDPVADLVNVAVAAGVIEKAGSWFSYGELRLGQGKEKAAEALRERPELLEEIRAKVLERSDQVVLAAGEDEGE</sequence>
<dbReference type="EMBL" id="D17392">
    <property type="protein sequence ID" value="BAA04215.1"/>
    <property type="molecule type" value="Genomic_DNA"/>
</dbReference>
<dbReference type="EMBL" id="AP008226">
    <property type="protein sequence ID" value="BAD71641.1"/>
    <property type="molecule type" value="Genomic_DNA"/>
</dbReference>
<dbReference type="RefSeq" id="WP_011228937.1">
    <property type="nucleotide sequence ID" value="NC_006461.1"/>
</dbReference>
<dbReference type="RefSeq" id="YP_145084.1">
    <property type="nucleotide sequence ID" value="NC_006461.1"/>
</dbReference>
<dbReference type="SMR" id="Q5SHB2"/>
<dbReference type="EnsemblBacteria" id="BAD71641">
    <property type="protein sequence ID" value="BAD71641"/>
    <property type="gene ID" value="BAD71641"/>
</dbReference>
<dbReference type="GeneID" id="3168508"/>
<dbReference type="KEGG" id="ttj:TTHA1818"/>
<dbReference type="PATRIC" id="fig|300852.9.peg.1789"/>
<dbReference type="eggNOG" id="COG0468">
    <property type="taxonomic scope" value="Bacteria"/>
</dbReference>
<dbReference type="HOGENOM" id="CLU_040469_3_2_0"/>
<dbReference type="PhylomeDB" id="Q5SHB2"/>
<dbReference type="Proteomes" id="UP000000532">
    <property type="component" value="Chromosome"/>
</dbReference>
<dbReference type="GO" id="GO:0005829">
    <property type="term" value="C:cytosol"/>
    <property type="evidence" value="ECO:0007669"/>
    <property type="project" value="TreeGrafter"/>
</dbReference>
<dbReference type="GO" id="GO:0005524">
    <property type="term" value="F:ATP binding"/>
    <property type="evidence" value="ECO:0007669"/>
    <property type="project" value="UniProtKB-UniRule"/>
</dbReference>
<dbReference type="GO" id="GO:0016887">
    <property type="term" value="F:ATP hydrolysis activity"/>
    <property type="evidence" value="ECO:0007669"/>
    <property type="project" value="InterPro"/>
</dbReference>
<dbReference type="GO" id="GO:0140664">
    <property type="term" value="F:ATP-dependent DNA damage sensor activity"/>
    <property type="evidence" value="ECO:0007669"/>
    <property type="project" value="InterPro"/>
</dbReference>
<dbReference type="GO" id="GO:0003684">
    <property type="term" value="F:damaged DNA binding"/>
    <property type="evidence" value="ECO:0007669"/>
    <property type="project" value="UniProtKB-UniRule"/>
</dbReference>
<dbReference type="GO" id="GO:0003697">
    <property type="term" value="F:single-stranded DNA binding"/>
    <property type="evidence" value="ECO:0007669"/>
    <property type="project" value="UniProtKB-UniRule"/>
</dbReference>
<dbReference type="GO" id="GO:0006310">
    <property type="term" value="P:DNA recombination"/>
    <property type="evidence" value="ECO:0007669"/>
    <property type="project" value="UniProtKB-UniRule"/>
</dbReference>
<dbReference type="GO" id="GO:0006281">
    <property type="term" value="P:DNA repair"/>
    <property type="evidence" value="ECO:0007669"/>
    <property type="project" value="UniProtKB-UniRule"/>
</dbReference>
<dbReference type="GO" id="GO:0009432">
    <property type="term" value="P:SOS response"/>
    <property type="evidence" value="ECO:0007669"/>
    <property type="project" value="UniProtKB-UniRule"/>
</dbReference>
<dbReference type="CDD" id="cd00983">
    <property type="entry name" value="RecA"/>
    <property type="match status" value="1"/>
</dbReference>
<dbReference type="FunFam" id="3.40.50.300:FF:000087">
    <property type="entry name" value="Recombinase RecA"/>
    <property type="match status" value="1"/>
</dbReference>
<dbReference type="Gene3D" id="3.40.50.300">
    <property type="entry name" value="P-loop containing nucleotide triphosphate hydrolases"/>
    <property type="match status" value="1"/>
</dbReference>
<dbReference type="HAMAP" id="MF_00268">
    <property type="entry name" value="RecA"/>
    <property type="match status" value="1"/>
</dbReference>
<dbReference type="InterPro" id="IPR003593">
    <property type="entry name" value="AAA+_ATPase"/>
</dbReference>
<dbReference type="InterPro" id="IPR013765">
    <property type="entry name" value="DNA_recomb/repair_RecA"/>
</dbReference>
<dbReference type="InterPro" id="IPR020584">
    <property type="entry name" value="DNA_recomb/repair_RecA_CS"/>
</dbReference>
<dbReference type="InterPro" id="IPR027417">
    <property type="entry name" value="P-loop_NTPase"/>
</dbReference>
<dbReference type="InterPro" id="IPR049261">
    <property type="entry name" value="RecA-like_C"/>
</dbReference>
<dbReference type="InterPro" id="IPR049428">
    <property type="entry name" value="RecA-like_N"/>
</dbReference>
<dbReference type="InterPro" id="IPR020588">
    <property type="entry name" value="RecA_ATP-bd"/>
</dbReference>
<dbReference type="InterPro" id="IPR023400">
    <property type="entry name" value="RecA_C_sf"/>
</dbReference>
<dbReference type="InterPro" id="IPR020587">
    <property type="entry name" value="RecA_monomer-monomer_interface"/>
</dbReference>
<dbReference type="NCBIfam" id="TIGR02012">
    <property type="entry name" value="tigrfam_recA"/>
    <property type="match status" value="1"/>
</dbReference>
<dbReference type="PANTHER" id="PTHR45900:SF1">
    <property type="entry name" value="MITOCHONDRIAL DNA REPAIR PROTEIN RECA HOMOLOG-RELATED"/>
    <property type="match status" value="1"/>
</dbReference>
<dbReference type="PANTHER" id="PTHR45900">
    <property type="entry name" value="RECA"/>
    <property type="match status" value="1"/>
</dbReference>
<dbReference type="Pfam" id="PF00154">
    <property type="entry name" value="RecA"/>
    <property type="match status" value="1"/>
</dbReference>
<dbReference type="Pfam" id="PF21096">
    <property type="entry name" value="RecA_C"/>
    <property type="match status" value="1"/>
</dbReference>
<dbReference type="PRINTS" id="PR00142">
    <property type="entry name" value="RECA"/>
</dbReference>
<dbReference type="SMART" id="SM00382">
    <property type="entry name" value="AAA"/>
    <property type="match status" value="1"/>
</dbReference>
<dbReference type="SUPFAM" id="SSF52540">
    <property type="entry name" value="P-loop containing nucleoside triphosphate hydrolases"/>
    <property type="match status" value="1"/>
</dbReference>
<dbReference type="SUPFAM" id="SSF54752">
    <property type="entry name" value="RecA protein, C-terminal domain"/>
    <property type="match status" value="1"/>
</dbReference>
<dbReference type="PROSITE" id="PS00321">
    <property type="entry name" value="RECA_1"/>
    <property type="match status" value="1"/>
</dbReference>
<dbReference type="PROSITE" id="PS50162">
    <property type="entry name" value="RECA_2"/>
    <property type="match status" value="1"/>
</dbReference>
<dbReference type="PROSITE" id="PS50163">
    <property type="entry name" value="RECA_3"/>
    <property type="match status" value="1"/>
</dbReference>
<feature type="chain" id="PRO_0000122881" description="Protein RecA">
    <location>
        <begin position="1"/>
        <end position="340"/>
    </location>
</feature>
<feature type="binding site" evidence="1">
    <location>
        <begin position="65"/>
        <end position="72"/>
    </location>
    <ligand>
        <name>ATP</name>
        <dbReference type="ChEBI" id="CHEBI:30616"/>
    </ligand>
</feature>
<reference key="1">
    <citation type="journal article" date="1993" name="J. Biochem.">
        <title>RecA protein from an extremely thermophilic bacterium, Thermus thermophilus HB8.</title>
        <authorList>
            <person name="Kato R."/>
            <person name="Kuramitsu S."/>
        </authorList>
    </citation>
    <scope>NUCLEOTIDE SEQUENCE [GENOMIC DNA]</scope>
</reference>
<reference key="2">
    <citation type="submission" date="2004-11" db="EMBL/GenBank/DDBJ databases">
        <title>Complete genome sequence of Thermus thermophilus HB8.</title>
        <authorList>
            <person name="Masui R."/>
            <person name="Kurokawa K."/>
            <person name="Nakagawa N."/>
            <person name="Tokunaga F."/>
            <person name="Koyama Y."/>
            <person name="Shibata T."/>
            <person name="Oshima T."/>
            <person name="Yokoyama S."/>
            <person name="Yasunaga T."/>
            <person name="Kuramitsu S."/>
        </authorList>
    </citation>
    <scope>NUCLEOTIDE SEQUENCE [LARGE SCALE GENOMIC DNA]</scope>
    <source>
        <strain>ATCC 27634 / DSM 579 / HB8</strain>
    </source>
</reference>
<keyword id="KW-0067">ATP-binding</keyword>
<keyword id="KW-0963">Cytoplasm</keyword>
<keyword id="KW-0227">DNA damage</keyword>
<keyword id="KW-0233">DNA recombination</keyword>
<keyword id="KW-0234">DNA repair</keyword>
<keyword id="KW-0238">DNA-binding</keyword>
<keyword id="KW-0547">Nucleotide-binding</keyword>
<keyword id="KW-1185">Reference proteome</keyword>
<keyword id="KW-0742">SOS response</keyword>
<comment type="function">
    <text>Can catalyze the hydrolysis of ATP in the presence of single-stranded DNA, the ATP-dependent uptake of single-stranded DNA by duplex DNA, and the ATP-dependent hybridization of homologous single-stranded DNAs. It interacts with LexA causing its activation and leading to its autocatalytic cleavage.</text>
</comment>
<comment type="subcellular location">
    <subcellularLocation>
        <location evidence="1">Cytoplasm</location>
    </subcellularLocation>
</comment>
<comment type="similarity">
    <text evidence="1">Belongs to the RecA family.</text>
</comment>
<accession>Q5SHB2</accession>
<gene>
    <name evidence="1" type="primary">recA</name>
    <name type="ordered locus">TTHA1818</name>
</gene>
<organism>
    <name type="scientific">Thermus thermophilus (strain ATCC 27634 / DSM 579 / HB8)</name>
    <dbReference type="NCBI Taxonomy" id="300852"/>
    <lineage>
        <taxon>Bacteria</taxon>
        <taxon>Thermotogati</taxon>
        <taxon>Deinococcota</taxon>
        <taxon>Deinococci</taxon>
        <taxon>Thermales</taxon>
        <taxon>Thermaceae</taxon>
        <taxon>Thermus</taxon>
    </lineage>
</organism>